<gene>
    <name type="primary">GPM6B</name>
    <name type="synonym">M6B</name>
</gene>
<reference key="1">
    <citation type="journal article" date="1996" name="Genomics">
        <title>Chromosomal mapping of the human M6 genes.</title>
        <authorList>
            <person name="Olinsky S."/>
            <person name="Loop B.T."/>
            <person name="Dekosky A."/>
            <person name="Ripepi B."/>
            <person name="Weng W."/>
            <person name="Cummins J."/>
            <person name="Wenger S.L."/>
            <person name="Yan Y."/>
            <person name="Lagenaur C."/>
            <person name="Narayanan V."/>
        </authorList>
    </citation>
    <scope>NUCLEOTIDE SEQUENCE [MRNA] (ISOFORM 2)</scope>
    <source>
        <tissue>Spinal cord</tissue>
    </source>
</reference>
<reference key="2">
    <citation type="journal article" date="1998" name="Am. J. Med. Genet.">
        <title>Mutation analysis of the M6b gene in patients with Rett syndrome.</title>
        <authorList>
            <person name="Narayanan V."/>
            <person name="Olinsky S.L."/>
            <person name="Dahle E."/>
            <person name="Naidu S."/>
            <person name="Zoghbi H.Y."/>
        </authorList>
    </citation>
    <scope>NUCLEOTIDE SEQUENCE [GENOMIC DNA] (ISOFORMS 1 AND 2)</scope>
</reference>
<reference key="3">
    <citation type="submission" date="1997-07" db="EMBL/GenBank/DDBJ databases">
        <title>Cloning of human full-length m6b1 gene.</title>
        <authorList>
            <person name="Xia J.-H."/>
            <person name="Liu C.-Y."/>
            <person name="Ruan Q.-G."/>
            <person name="Fu J.-J."/>
            <person name="Deng H.-X."/>
        </authorList>
    </citation>
    <scope>NUCLEOTIDE SEQUENCE [MRNA] (ISOFORM 1)</scope>
</reference>
<reference key="4">
    <citation type="submission" date="1998-02" db="EMBL/GenBank/DDBJ databases">
        <title>Molecular cloning of a splicing form of M6b.</title>
        <authorList>
            <person name="Liu C.-Y."/>
            <person name="Cui F."/>
            <person name="Fu J.-J."/>
            <person name="Xia J.-H."/>
        </authorList>
    </citation>
    <scope>NUCLEOTIDE SEQUENCE [GENOMIC DNA] (ISOFORM 1)</scope>
</reference>
<reference key="5">
    <citation type="journal article" date="2004" name="Nat. Genet.">
        <title>Complete sequencing and characterization of 21,243 full-length human cDNAs.</title>
        <authorList>
            <person name="Ota T."/>
            <person name="Suzuki Y."/>
            <person name="Nishikawa T."/>
            <person name="Otsuki T."/>
            <person name="Sugiyama T."/>
            <person name="Irie R."/>
            <person name="Wakamatsu A."/>
            <person name="Hayashi K."/>
            <person name="Sato H."/>
            <person name="Nagai K."/>
            <person name="Kimura K."/>
            <person name="Makita H."/>
            <person name="Sekine M."/>
            <person name="Obayashi M."/>
            <person name="Nishi T."/>
            <person name="Shibahara T."/>
            <person name="Tanaka T."/>
            <person name="Ishii S."/>
            <person name="Yamamoto J."/>
            <person name="Saito K."/>
            <person name="Kawai Y."/>
            <person name="Isono Y."/>
            <person name="Nakamura Y."/>
            <person name="Nagahari K."/>
            <person name="Murakami K."/>
            <person name="Yasuda T."/>
            <person name="Iwayanagi T."/>
            <person name="Wagatsuma M."/>
            <person name="Shiratori A."/>
            <person name="Sudo H."/>
            <person name="Hosoiri T."/>
            <person name="Kaku Y."/>
            <person name="Kodaira H."/>
            <person name="Kondo H."/>
            <person name="Sugawara M."/>
            <person name="Takahashi M."/>
            <person name="Kanda K."/>
            <person name="Yokoi T."/>
            <person name="Furuya T."/>
            <person name="Kikkawa E."/>
            <person name="Omura Y."/>
            <person name="Abe K."/>
            <person name="Kamihara K."/>
            <person name="Katsuta N."/>
            <person name="Sato K."/>
            <person name="Tanikawa M."/>
            <person name="Yamazaki M."/>
            <person name="Ninomiya K."/>
            <person name="Ishibashi T."/>
            <person name="Yamashita H."/>
            <person name="Murakawa K."/>
            <person name="Fujimori K."/>
            <person name="Tanai H."/>
            <person name="Kimata M."/>
            <person name="Watanabe M."/>
            <person name="Hiraoka S."/>
            <person name="Chiba Y."/>
            <person name="Ishida S."/>
            <person name="Ono Y."/>
            <person name="Takiguchi S."/>
            <person name="Watanabe S."/>
            <person name="Yosida M."/>
            <person name="Hotuta T."/>
            <person name="Kusano J."/>
            <person name="Kanehori K."/>
            <person name="Takahashi-Fujii A."/>
            <person name="Hara H."/>
            <person name="Tanase T.-O."/>
            <person name="Nomura Y."/>
            <person name="Togiya S."/>
            <person name="Komai F."/>
            <person name="Hara R."/>
            <person name="Takeuchi K."/>
            <person name="Arita M."/>
            <person name="Imose N."/>
            <person name="Musashino K."/>
            <person name="Yuuki H."/>
            <person name="Oshima A."/>
            <person name="Sasaki N."/>
            <person name="Aotsuka S."/>
            <person name="Yoshikawa Y."/>
            <person name="Matsunawa H."/>
            <person name="Ichihara T."/>
            <person name="Shiohata N."/>
            <person name="Sano S."/>
            <person name="Moriya S."/>
            <person name="Momiyama H."/>
            <person name="Satoh N."/>
            <person name="Takami S."/>
            <person name="Terashima Y."/>
            <person name="Suzuki O."/>
            <person name="Nakagawa S."/>
            <person name="Senoh A."/>
            <person name="Mizoguchi H."/>
            <person name="Goto Y."/>
            <person name="Shimizu F."/>
            <person name="Wakebe H."/>
            <person name="Hishigaki H."/>
            <person name="Watanabe T."/>
            <person name="Sugiyama A."/>
            <person name="Takemoto M."/>
            <person name="Kawakami B."/>
            <person name="Yamazaki M."/>
            <person name="Watanabe K."/>
            <person name="Kumagai A."/>
            <person name="Itakura S."/>
            <person name="Fukuzumi Y."/>
            <person name="Fujimori Y."/>
            <person name="Komiyama M."/>
            <person name="Tashiro H."/>
            <person name="Tanigami A."/>
            <person name="Fujiwara T."/>
            <person name="Ono T."/>
            <person name="Yamada K."/>
            <person name="Fujii Y."/>
            <person name="Ozaki K."/>
            <person name="Hirao M."/>
            <person name="Ohmori Y."/>
            <person name="Kawabata A."/>
            <person name="Hikiji T."/>
            <person name="Kobatake N."/>
            <person name="Inagaki H."/>
            <person name="Ikema Y."/>
            <person name="Okamoto S."/>
            <person name="Okitani R."/>
            <person name="Kawakami T."/>
            <person name="Noguchi S."/>
            <person name="Itoh T."/>
            <person name="Shigeta K."/>
            <person name="Senba T."/>
            <person name="Matsumura K."/>
            <person name="Nakajima Y."/>
            <person name="Mizuno T."/>
            <person name="Morinaga M."/>
            <person name="Sasaki M."/>
            <person name="Togashi T."/>
            <person name="Oyama M."/>
            <person name="Hata H."/>
            <person name="Watanabe M."/>
            <person name="Komatsu T."/>
            <person name="Mizushima-Sugano J."/>
            <person name="Satoh T."/>
            <person name="Shirai Y."/>
            <person name="Takahashi Y."/>
            <person name="Nakagawa K."/>
            <person name="Okumura K."/>
            <person name="Nagase T."/>
            <person name="Nomura N."/>
            <person name="Kikuchi H."/>
            <person name="Masuho Y."/>
            <person name="Yamashita R."/>
            <person name="Nakai K."/>
            <person name="Yada T."/>
            <person name="Nakamura Y."/>
            <person name="Ohara O."/>
            <person name="Isogai T."/>
            <person name="Sugano S."/>
        </authorList>
    </citation>
    <scope>NUCLEOTIDE SEQUENCE [LARGE SCALE MRNA] (ISOFORM 4)</scope>
    <source>
        <tissue>Brain</tissue>
    </source>
</reference>
<reference key="6">
    <citation type="journal article" date="2005" name="Nature">
        <title>The DNA sequence of the human X chromosome.</title>
        <authorList>
            <person name="Ross M.T."/>
            <person name="Grafham D.V."/>
            <person name="Coffey A.J."/>
            <person name="Scherer S."/>
            <person name="McLay K."/>
            <person name="Muzny D."/>
            <person name="Platzer M."/>
            <person name="Howell G.R."/>
            <person name="Burrows C."/>
            <person name="Bird C.P."/>
            <person name="Frankish A."/>
            <person name="Lovell F.L."/>
            <person name="Howe K.L."/>
            <person name="Ashurst J.L."/>
            <person name="Fulton R.S."/>
            <person name="Sudbrak R."/>
            <person name="Wen G."/>
            <person name="Jones M.C."/>
            <person name="Hurles M.E."/>
            <person name="Andrews T.D."/>
            <person name="Scott C.E."/>
            <person name="Searle S."/>
            <person name="Ramser J."/>
            <person name="Whittaker A."/>
            <person name="Deadman R."/>
            <person name="Carter N.P."/>
            <person name="Hunt S.E."/>
            <person name="Chen R."/>
            <person name="Cree A."/>
            <person name="Gunaratne P."/>
            <person name="Havlak P."/>
            <person name="Hodgson A."/>
            <person name="Metzker M.L."/>
            <person name="Richards S."/>
            <person name="Scott G."/>
            <person name="Steffen D."/>
            <person name="Sodergren E."/>
            <person name="Wheeler D.A."/>
            <person name="Worley K.C."/>
            <person name="Ainscough R."/>
            <person name="Ambrose K.D."/>
            <person name="Ansari-Lari M.A."/>
            <person name="Aradhya S."/>
            <person name="Ashwell R.I."/>
            <person name="Babbage A.K."/>
            <person name="Bagguley C.L."/>
            <person name="Ballabio A."/>
            <person name="Banerjee R."/>
            <person name="Barker G.E."/>
            <person name="Barlow K.F."/>
            <person name="Barrett I.P."/>
            <person name="Bates K.N."/>
            <person name="Beare D.M."/>
            <person name="Beasley H."/>
            <person name="Beasley O."/>
            <person name="Beck A."/>
            <person name="Bethel G."/>
            <person name="Blechschmidt K."/>
            <person name="Brady N."/>
            <person name="Bray-Allen S."/>
            <person name="Bridgeman A.M."/>
            <person name="Brown A.J."/>
            <person name="Brown M.J."/>
            <person name="Bonnin D."/>
            <person name="Bruford E.A."/>
            <person name="Buhay C."/>
            <person name="Burch P."/>
            <person name="Burford D."/>
            <person name="Burgess J."/>
            <person name="Burrill W."/>
            <person name="Burton J."/>
            <person name="Bye J.M."/>
            <person name="Carder C."/>
            <person name="Carrel L."/>
            <person name="Chako J."/>
            <person name="Chapman J.C."/>
            <person name="Chavez D."/>
            <person name="Chen E."/>
            <person name="Chen G."/>
            <person name="Chen Y."/>
            <person name="Chen Z."/>
            <person name="Chinault C."/>
            <person name="Ciccodicola A."/>
            <person name="Clark S.Y."/>
            <person name="Clarke G."/>
            <person name="Clee C.M."/>
            <person name="Clegg S."/>
            <person name="Clerc-Blankenburg K."/>
            <person name="Clifford K."/>
            <person name="Cobley V."/>
            <person name="Cole C.G."/>
            <person name="Conquer J.S."/>
            <person name="Corby N."/>
            <person name="Connor R.E."/>
            <person name="David R."/>
            <person name="Davies J."/>
            <person name="Davis C."/>
            <person name="Davis J."/>
            <person name="Delgado O."/>
            <person name="Deshazo D."/>
            <person name="Dhami P."/>
            <person name="Ding Y."/>
            <person name="Dinh H."/>
            <person name="Dodsworth S."/>
            <person name="Draper H."/>
            <person name="Dugan-Rocha S."/>
            <person name="Dunham A."/>
            <person name="Dunn M."/>
            <person name="Durbin K.J."/>
            <person name="Dutta I."/>
            <person name="Eades T."/>
            <person name="Ellwood M."/>
            <person name="Emery-Cohen A."/>
            <person name="Errington H."/>
            <person name="Evans K.L."/>
            <person name="Faulkner L."/>
            <person name="Francis F."/>
            <person name="Frankland J."/>
            <person name="Fraser A.E."/>
            <person name="Galgoczy P."/>
            <person name="Gilbert J."/>
            <person name="Gill R."/>
            <person name="Gloeckner G."/>
            <person name="Gregory S.G."/>
            <person name="Gribble S."/>
            <person name="Griffiths C."/>
            <person name="Grocock R."/>
            <person name="Gu Y."/>
            <person name="Gwilliam R."/>
            <person name="Hamilton C."/>
            <person name="Hart E.A."/>
            <person name="Hawes A."/>
            <person name="Heath P.D."/>
            <person name="Heitmann K."/>
            <person name="Hennig S."/>
            <person name="Hernandez J."/>
            <person name="Hinzmann B."/>
            <person name="Ho S."/>
            <person name="Hoffs M."/>
            <person name="Howden P.J."/>
            <person name="Huckle E.J."/>
            <person name="Hume J."/>
            <person name="Hunt P.J."/>
            <person name="Hunt A.R."/>
            <person name="Isherwood J."/>
            <person name="Jacob L."/>
            <person name="Johnson D."/>
            <person name="Jones S."/>
            <person name="de Jong P.J."/>
            <person name="Joseph S.S."/>
            <person name="Keenan S."/>
            <person name="Kelly S."/>
            <person name="Kershaw J.K."/>
            <person name="Khan Z."/>
            <person name="Kioschis P."/>
            <person name="Klages S."/>
            <person name="Knights A.J."/>
            <person name="Kosiura A."/>
            <person name="Kovar-Smith C."/>
            <person name="Laird G.K."/>
            <person name="Langford C."/>
            <person name="Lawlor S."/>
            <person name="Leversha M."/>
            <person name="Lewis L."/>
            <person name="Liu W."/>
            <person name="Lloyd C."/>
            <person name="Lloyd D.M."/>
            <person name="Loulseged H."/>
            <person name="Loveland J.E."/>
            <person name="Lovell J.D."/>
            <person name="Lozado R."/>
            <person name="Lu J."/>
            <person name="Lyne R."/>
            <person name="Ma J."/>
            <person name="Maheshwari M."/>
            <person name="Matthews L.H."/>
            <person name="McDowall J."/>
            <person name="McLaren S."/>
            <person name="McMurray A."/>
            <person name="Meidl P."/>
            <person name="Meitinger T."/>
            <person name="Milne S."/>
            <person name="Miner G."/>
            <person name="Mistry S.L."/>
            <person name="Morgan M."/>
            <person name="Morris S."/>
            <person name="Mueller I."/>
            <person name="Mullikin J.C."/>
            <person name="Nguyen N."/>
            <person name="Nordsiek G."/>
            <person name="Nyakatura G."/>
            <person name="O'dell C.N."/>
            <person name="Okwuonu G."/>
            <person name="Palmer S."/>
            <person name="Pandian R."/>
            <person name="Parker D."/>
            <person name="Parrish J."/>
            <person name="Pasternak S."/>
            <person name="Patel D."/>
            <person name="Pearce A.V."/>
            <person name="Pearson D.M."/>
            <person name="Pelan S.E."/>
            <person name="Perez L."/>
            <person name="Porter K.M."/>
            <person name="Ramsey Y."/>
            <person name="Reichwald K."/>
            <person name="Rhodes S."/>
            <person name="Ridler K.A."/>
            <person name="Schlessinger D."/>
            <person name="Schueler M.G."/>
            <person name="Sehra H.K."/>
            <person name="Shaw-Smith C."/>
            <person name="Shen H."/>
            <person name="Sheridan E.M."/>
            <person name="Shownkeen R."/>
            <person name="Skuce C.D."/>
            <person name="Smith M.L."/>
            <person name="Sotheran E.C."/>
            <person name="Steingruber H.E."/>
            <person name="Steward C.A."/>
            <person name="Storey R."/>
            <person name="Swann R.M."/>
            <person name="Swarbreck D."/>
            <person name="Tabor P.E."/>
            <person name="Taudien S."/>
            <person name="Taylor T."/>
            <person name="Teague B."/>
            <person name="Thomas K."/>
            <person name="Thorpe A."/>
            <person name="Timms K."/>
            <person name="Tracey A."/>
            <person name="Trevanion S."/>
            <person name="Tromans A.C."/>
            <person name="d'Urso M."/>
            <person name="Verduzco D."/>
            <person name="Villasana D."/>
            <person name="Waldron L."/>
            <person name="Wall M."/>
            <person name="Wang Q."/>
            <person name="Warren J."/>
            <person name="Warry G.L."/>
            <person name="Wei X."/>
            <person name="West A."/>
            <person name="Whitehead S.L."/>
            <person name="Whiteley M.N."/>
            <person name="Wilkinson J.E."/>
            <person name="Willey D.L."/>
            <person name="Williams G."/>
            <person name="Williams L."/>
            <person name="Williamson A."/>
            <person name="Williamson H."/>
            <person name="Wilming L."/>
            <person name="Woodmansey R.L."/>
            <person name="Wray P.W."/>
            <person name="Yen J."/>
            <person name="Zhang J."/>
            <person name="Zhou J."/>
            <person name="Zoghbi H."/>
            <person name="Zorilla S."/>
            <person name="Buck D."/>
            <person name="Reinhardt R."/>
            <person name="Poustka A."/>
            <person name="Rosenthal A."/>
            <person name="Lehrach H."/>
            <person name="Meindl A."/>
            <person name="Minx P.J."/>
            <person name="Hillier L.W."/>
            <person name="Willard H.F."/>
            <person name="Wilson R.K."/>
            <person name="Waterston R.H."/>
            <person name="Rice C.M."/>
            <person name="Vaudin M."/>
            <person name="Coulson A."/>
            <person name="Nelson D.L."/>
            <person name="Weinstock G."/>
            <person name="Sulston J.E."/>
            <person name="Durbin R.M."/>
            <person name="Hubbard T."/>
            <person name="Gibbs R.A."/>
            <person name="Beck S."/>
            <person name="Rogers J."/>
            <person name="Bentley D.R."/>
        </authorList>
    </citation>
    <scope>NUCLEOTIDE SEQUENCE [LARGE SCALE GENOMIC DNA]</scope>
</reference>
<reference key="7">
    <citation type="submission" date="2005-07" db="EMBL/GenBank/DDBJ databases">
        <authorList>
            <person name="Mural R.J."/>
            <person name="Istrail S."/>
            <person name="Sutton G.G."/>
            <person name="Florea L."/>
            <person name="Halpern A.L."/>
            <person name="Mobarry C.M."/>
            <person name="Lippert R."/>
            <person name="Walenz B."/>
            <person name="Shatkay H."/>
            <person name="Dew I."/>
            <person name="Miller J.R."/>
            <person name="Flanigan M.J."/>
            <person name="Edwards N.J."/>
            <person name="Bolanos R."/>
            <person name="Fasulo D."/>
            <person name="Halldorsson B.V."/>
            <person name="Hannenhalli S."/>
            <person name="Turner R."/>
            <person name="Yooseph S."/>
            <person name="Lu F."/>
            <person name="Nusskern D.R."/>
            <person name="Shue B.C."/>
            <person name="Zheng X.H."/>
            <person name="Zhong F."/>
            <person name="Delcher A.L."/>
            <person name="Huson D.H."/>
            <person name="Kravitz S.A."/>
            <person name="Mouchard L."/>
            <person name="Reinert K."/>
            <person name="Remington K.A."/>
            <person name="Clark A.G."/>
            <person name="Waterman M.S."/>
            <person name="Eichler E.E."/>
            <person name="Adams M.D."/>
            <person name="Hunkapiller M.W."/>
            <person name="Myers E.W."/>
            <person name="Venter J.C."/>
        </authorList>
    </citation>
    <scope>NUCLEOTIDE SEQUENCE [LARGE SCALE GENOMIC DNA]</scope>
</reference>
<reference key="8">
    <citation type="journal article" date="2004" name="Genome Res.">
        <title>The status, quality, and expansion of the NIH full-length cDNA project: the Mammalian Gene Collection (MGC).</title>
        <authorList>
            <consortium name="The MGC Project Team"/>
        </authorList>
    </citation>
    <scope>NUCLEOTIDE SEQUENCE [LARGE SCALE MRNA] (ISOFORMS 1 AND 3)</scope>
    <source>
        <tissue>Brain</tissue>
    </source>
</reference>
<reference key="9">
    <citation type="journal article" date="2009" name="J. Mol. Neurosci.">
        <title>Membrane glycoprotein M6B interacts with the human serotonin transporter.</title>
        <authorList>
            <person name="Fjorback A.W."/>
            <person name="Muller H.K."/>
            <person name="Wiborg O."/>
        </authorList>
    </citation>
    <scope>INTERACTION WITH SERT</scope>
</reference>
<reference key="10">
    <citation type="journal article" date="2011" name="J. Bone Miner. Res.">
        <title>GPM6B regulates osteoblast function and induction of mineralization by controlling cytoskeleton and matrix vesicle release.</title>
        <authorList>
            <person name="Drabek K."/>
            <person name="van de Peppel J."/>
            <person name="Eijken M."/>
            <person name="van Leeuwen J.P."/>
        </authorList>
    </citation>
    <scope>FUNCTION</scope>
</reference>
<reference key="11">
    <citation type="journal article" date="2011" name="Sci. Signal.">
        <title>System-wide temporal characterization of the proteome and phosphoproteome of human embryonic stem cell differentiation.</title>
        <authorList>
            <person name="Rigbolt K.T."/>
            <person name="Prokhorova T.A."/>
            <person name="Akimov V."/>
            <person name="Henningsen J."/>
            <person name="Johansen P.T."/>
            <person name="Kratchmarova I."/>
            <person name="Kassem M."/>
            <person name="Mann M."/>
            <person name="Olsen J.V."/>
            <person name="Blagoev B."/>
        </authorList>
    </citation>
    <scope>PHOSPHORYLATION [LARGE SCALE ANALYSIS] AT SER-318 (ISOFORM 4)</scope>
    <scope>IDENTIFICATION BY MASS SPECTROMETRY [LARGE SCALE ANALYSIS]</scope>
</reference>
<comment type="function">
    <text evidence="5">May be involved in neural development. Involved in regulation of osteoblast function and bone formation. Involved in matrix vesicle release by osteoblasts; this function seems to involve maintenance of the actin cytoskeleton. May be involved in cellular trafficking of SERT and thereby in regulation of serotonin uptake.</text>
</comment>
<comment type="subunit">
    <text evidence="4">Interacts with SERT.</text>
</comment>
<comment type="interaction">
    <interactant intactId="EBI-11992640">
        <id>Q13491-3</id>
    </interactant>
    <interactant intactId="EBI-781551">
        <id>Q9Y282</id>
        <label>ERGIC3</label>
    </interactant>
    <organismsDiffer>false</organismsDiffer>
    <experiments>3</experiments>
</comment>
<comment type="interaction">
    <interactant intactId="EBI-11992640">
        <id>Q13491-3</id>
    </interactant>
    <interactant intactId="EBI-712466">
        <id>Q16623</id>
        <label>STX1A</label>
    </interactant>
    <organismsDiffer>false</organismsDiffer>
    <experiments>3</experiments>
</comment>
<comment type="subcellular location">
    <subcellularLocation>
        <location evidence="1">Cell membrane</location>
        <topology evidence="1">Multi-pass membrane protein</topology>
    </subcellularLocation>
    <text evidence="1">Colocalizes with SERT at the plasma membrane.</text>
</comment>
<comment type="alternative products">
    <event type="alternative splicing"/>
    <isoform>
        <id>Q13491-1</id>
        <name>1</name>
        <name>A</name>
        <sequence type="displayed"/>
    </isoform>
    <isoform>
        <id>Q13491-2</id>
        <name>2</name>
        <name>B</name>
        <sequence type="described" ref="VSP_003326"/>
    </isoform>
    <isoform>
        <id>Q13491-3</id>
        <name>3</name>
        <sequence type="described" ref="VSP_041121"/>
    </isoform>
    <isoform>
        <id>Q13491-4</id>
        <name>4</name>
        <sequence type="described" ref="VSP_041121 VSP_043247"/>
    </isoform>
</comment>
<comment type="tissue specificity">
    <text>Neurons and glia; cerebellar Bergmann glia, in glia within white matter tracts of the cerebellum and cerebrum, and in embryonic dorsal root ganglia.</text>
</comment>
<comment type="similarity">
    <text evidence="9">Belongs to the myelin proteolipid protein family.</text>
</comment>
<comment type="sequence caution" evidence="9">
    <conflict type="erroneous initiation">
        <sequence resource="EMBL-CDS" id="AAB16888"/>
    </conflict>
</comment>
<comment type="sequence caution" evidence="9">
    <conflict type="erroneous initiation">
        <sequence resource="EMBL-CDS" id="AAC19165"/>
    </conflict>
</comment>
<evidence type="ECO:0000250" key="1"/>
<evidence type="ECO:0000250" key="2">
    <source>
        <dbReference type="UniProtKB" id="P35803"/>
    </source>
</evidence>
<evidence type="ECO:0000255" key="3"/>
<evidence type="ECO:0000269" key="4">
    <source>
    </source>
</evidence>
<evidence type="ECO:0000269" key="5">
    <source>
    </source>
</evidence>
<evidence type="ECO:0000303" key="6">
    <source>
    </source>
</evidence>
<evidence type="ECO:0000303" key="7">
    <source>
    </source>
</evidence>
<evidence type="ECO:0000303" key="8">
    <source>
    </source>
</evidence>
<evidence type="ECO:0000305" key="9"/>
<evidence type="ECO:0007744" key="10">
    <source>
    </source>
</evidence>
<proteinExistence type="evidence at protein level"/>
<accession>Q13491</accession>
<accession>O76077</accession>
<accession>Q86X43</accession>
<accession>Q8N956</accession>
<sequence length="265" mass="28989">MKPAMETAAEENTEQSQERKGCFECCIKCLGGVPYASLVATILCFSGVALFCGCGHVALAGTVAILEQHFSTNASDHALLSEVIQLMQYVIYGIASFFFLYGIILLAEGFYTTSAVKELHGEFKTTACGRCISGMFVFLTYVLGVAWLGVFGFSAVPVFMFYNIWSTCEVIKSPQTNGTTGVEQICVDIRQYGIIPWNAFPGKICGSALENICNTNEFYMSYHLFIVACAGAGATVIALLIYMMATTYNYAVLKFKSREDCCTKF</sequence>
<protein>
    <recommendedName>
        <fullName>Neuronal membrane glycoprotein M6-b</fullName>
        <shortName>M6b</shortName>
    </recommendedName>
</protein>
<name>GPM6B_HUMAN</name>
<dbReference type="EMBL" id="U45955">
    <property type="protein sequence ID" value="AAB16888.1"/>
    <property type="status" value="ALT_INIT"/>
    <property type="molecule type" value="mRNA"/>
</dbReference>
<dbReference type="EMBL" id="AF037347">
    <property type="protein sequence ID" value="AAC19165.1"/>
    <property type="status" value="ALT_INIT"/>
    <property type="molecule type" value="Genomic_DNA"/>
</dbReference>
<dbReference type="EMBL" id="AF037341">
    <property type="protein sequence ID" value="AAC19165.1"/>
    <property type="status" value="JOINED"/>
    <property type="molecule type" value="Genomic_DNA"/>
</dbReference>
<dbReference type="EMBL" id="AF037342">
    <property type="protein sequence ID" value="AAC19165.1"/>
    <property type="status" value="JOINED"/>
    <property type="molecule type" value="Genomic_DNA"/>
</dbReference>
<dbReference type="EMBL" id="AF037343">
    <property type="protein sequence ID" value="AAC19165.1"/>
    <property type="status" value="JOINED"/>
    <property type="molecule type" value="Genomic_DNA"/>
</dbReference>
<dbReference type="EMBL" id="AF037344">
    <property type="protein sequence ID" value="AAC19165.1"/>
    <property type="status" value="JOINED"/>
    <property type="molecule type" value="Genomic_DNA"/>
</dbReference>
<dbReference type="EMBL" id="AF037345">
    <property type="protein sequence ID" value="AAC19165.1"/>
    <property type="status" value="JOINED"/>
    <property type="molecule type" value="Genomic_DNA"/>
</dbReference>
<dbReference type="EMBL" id="AF037346">
    <property type="protein sequence ID" value="AAC19165.1"/>
    <property type="status" value="JOINED"/>
    <property type="molecule type" value="Genomic_DNA"/>
</dbReference>
<dbReference type="EMBL" id="AF037347">
    <property type="protein sequence ID" value="AAC19166.1"/>
    <property type="molecule type" value="Genomic_DNA"/>
</dbReference>
<dbReference type="EMBL" id="AF037340">
    <property type="protein sequence ID" value="AAC19166.1"/>
    <property type="status" value="JOINED"/>
    <property type="molecule type" value="Genomic_DNA"/>
</dbReference>
<dbReference type="EMBL" id="AF037342">
    <property type="protein sequence ID" value="AAC19166.1"/>
    <property type="status" value="JOINED"/>
    <property type="molecule type" value="Genomic_DNA"/>
</dbReference>
<dbReference type="EMBL" id="AF037343">
    <property type="protein sequence ID" value="AAC19166.1"/>
    <property type="status" value="JOINED"/>
    <property type="molecule type" value="Genomic_DNA"/>
</dbReference>
<dbReference type="EMBL" id="AF037344">
    <property type="protein sequence ID" value="AAC19166.1"/>
    <property type="status" value="JOINED"/>
    <property type="molecule type" value="Genomic_DNA"/>
</dbReference>
<dbReference type="EMBL" id="AF037345">
    <property type="protein sequence ID" value="AAC19166.1"/>
    <property type="status" value="JOINED"/>
    <property type="molecule type" value="Genomic_DNA"/>
</dbReference>
<dbReference type="EMBL" id="AF037346">
    <property type="protein sequence ID" value="AAC19166.1"/>
    <property type="status" value="JOINED"/>
    <property type="molecule type" value="Genomic_DNA"/>
</dbReference>
<dbReference type="EMBL" id="AF016004">
    <property type="protein sequence ID" value="AAC28560.1"/>
    <property type="molecule type" value="mRNA"/>
</dbReference>
<dbReference type="EMBL" id="AF047197">
    <property type="protein sequence ID" value="AAD13718.1"/>
    <property type="molecule type" value="Genomic_DNA"/>
</dbReference>
<dbReference type="EMBL" id="AF047191">
    <property type="protein sequence ID" value="AAD13718.1"/>
    <property type="status" value="JOINED"/>
    <property type="molecule type" value="Genomic_DNA"/>
</dbReference>
<dbReference type="EMBL" id="AF047192">
    <property type="protein sequence ID" value="AAD13718.1"/>
    <property type="status" value="JOINED"/>
    <property type="molecule type" value="Genomic_DNA"/>
</dbReference>
<dbReference type="EMBL" id="AF047193">
    <property type="protein sequence ID" value="AAD13718.1"/>
    <property type="status" value="JOINED"/>
    <property type="molecule type" value="Genomic_DNA"/>
</dbReference>
<dbReference type="EMBL" id="AF047194">
    <property type="protein sequence ID" value="AAD13718.1"/>
    <property type="status" value="JOINED"/>
    <property type="molecule type" value="Genomic_DNA"/>
</dbReference>
<dbReference type="EMBL" id="AF047195">
    <property type="protein sequence ID" value="AAD13718.1"/>
    <property type="status" value="JOINED"/>
    <property type="molecule type" value="Genomic_DNA"/>
</dbReference>
<dbReference type="EMBL" id="AF047196">
    <property type="protein sequence ID" value="AAD13718.1"/>
    <property type="status" value="JOINED"/>
    <property type="molecule type" value="Genomic_DNA"/>
</dbReference>
<dbReference type="EMBL" id="AK095657">
    <property type="protein sequence ID" value="BAC04600.1"/>
    <property type="molecule type" value="mRNA"/>
</dbReference>
<dbReference type="EMBL" id="AC003035">
    <property type="status" value="NOT_ANNOTATED_CDS"/>
    <property type="molecule type" value="Genomic_DNA"/>
</dbReference>
<dbReference type="EMBL" id="AC003037">
    <property type="status" value="NOT_ANNOTATED_CDS"/>
    <property type="molecule type" value="Genomic_DNA"/>
</dbReference>
<dbReference type="EMBL" id="CH471074">
    <property type="protein sequence ID" value="EAW98845.1"/>
    <property type="molecule type" value="Genomic_DNA"/>
</dbReference>
<dbReference type="EMBL" id="CH471074">
    <property type="protein sequence ID" value="EAW98846.1"/>
    <property type="molecule type" value="Genomic_DNA"/>
</dbReference>
<dbReference type="EMBL" id="BC008151">
    <property type="protein sequence ID" value="AAH08151.1"/>
    <property type="molecule type" value="mRNA"/>
</dbReference>
<dbReference type="EMBL" id="BC047295">
    <property type="protein sequence ID" value="AAH47295.1"/>
    <property type="molecule type" value="mRNA"/>
</dbReference>
<dbReference type="CCDS" id="CCDS14158.1">
    <molecule id="Q13491-1"/>
</dbReference>
<dbReference type="CCDS" id="CCDS35206.1">
    <molecule id="Q13491-4"/>
</dbReference>
<dbReference type="CCDS" id="CCDS35207.1">
    <molecule id="Q13491-3"/>
</dbReference>
<dbReference type="CCDS" id="CCDS48084.1">
    <molecule id="Q13491-2"/>
</dbReference>
<dbReference type="RefSeq" id="NP_001001994.1">
    <molecule id="Q13491-2"/>
    <property type="nucleotide sequence ID" value="NM_001001994.3"/>
</dbReference>
<dbReference type="RefSeq" id="NP_001001995.1">
    <molecule id="Q13491-4"/>
    <property type="nucleotide sequence ID" value="NM_001001995.3"/>
</dbReference>
<dbReference type="RefSeq" id="NP_001001996.1">
    <molecule id="Q13491-3"/>
    <property type="nucleotide sequence ID" value="NM_001001996.3"/>
</dbReference>
<dbReference type="RefSeq" id="NP_005269.1">
    <molecule id="Q13491-1"/>
    <property type="nucleotide sequence ID" value="NM_005278.5"/>
</dbReference>
<dbReference type="SMR" id="Q13491"/>
<dbReference type="BioGRID" id="109085">
    <property type="interactions" value="26"/>
</dbReference>
<dbReference type="FunCoup" id="Q13491">
    <property type="interactions" value="444"/>
</dbReference>
<dbReference type="IntAct" id="Q13491">
    <property type="interactions" value="18"/>
</dbReference>
<dbReference type="STRING" id="9606.ENSP00000316861"/>
<dbReference type="GlyCosmos" id="Q13491">
    <property type="glycosylation" value="2 sites, No reported glycans"/>
</dbReference>
<dbReference type="GlyGen" id="Q13491">
    <property type="glycosylation" value="2 sites, 1 N-linked glycan (1 site)"/>
</dbReference>
<dbReference type="iPTMnet" id="Q13491"/>
<dbReference type="PhosphoSitePlus" id="Q13491"/>
<dbReference type="SwissPalm" id="Q13491"/>
<dbReference type="BioMuta" id="GPM6B"/>
<dbReference type="DMDM" id="20141466"/>
<dbReference type="jPOST" id="Q13491"/>
<dbReference type="MassIVE" id="Q13491"/>
<dbReference type="PeptideAtlas" id="Q13491"/>
<dbReference type="ProteomicsDB" id="59485">
    <molecule id="Q13491-1"/>
</dbReference>
<dbReference type="ProteomicsDB" id="59486">
    <molecule id="Q13491-2"/>
</dbReference>
<dbReference type="ProteomicsDB" id="59487">
    <molecule id="Q13491-3"/>
</dbReference>
<dbReference type="ProteomicsDB" id="59488">
    <molecule id="Q13491-4"/>
</dbReference>
<dbReference type="Antibodypedia" id="484">
    <property type="antibodies" value="134 antibodies from 23 providers"/>
</dbReference>
<dbReference type="DNASU" id="2824"/>
<dbReference type="Ensembl" id="ENST00000316715.9">
    <molecule id="Q13491-4"/>
    <property type="protein sequence ID" value="ENSP00000316861.4"/>
    <property type="gene ID" value="ENSG00000046653.15"/>
</dbReference>
<dbReference type="Ensembl" id="ENST00000355135.6">
    <molecule id="Q13491-3"/>
    <property type="protein sequence ID" value="ENSP00000347258.2"/>
    <property type="gene ID" value="ENSG00000046653.15"/>
</dbReference>
<dbReference type="Ensembl" id="ENST00000356942.9">
    <molecule id="Q13491-1"/>
    <property type="protein sequence ID" value="ENSP00000349420.5"/>
    <property type="gene ID" value="ENSG00000046653.15"/>
</dbReference>
<dbReference type="Ensembl" id="ENST00000454189.7">
    <molecule id="Q13491-2"/>
    <property type="protein sequence ID" value="ENSP00000389915.2"/>
    <property type="gene ID" value="ENSG00000046653.15"/>
</dbReference>
<dbReference type="GeneID" id="2824"/>
<dbReference type="KEGG" id="hsa:2824"/>
<dbReference type="MANE-Select" id="ENST00000316715.9">
    <molecule id="Q13491-4"/>
    <property type="protein sequence ID" value="ENSP00000316861.4"/>
    <property type="RefSeq nucleotide sequence ID" value="NM_001001995.3"/>
    <property type="RefSeq protein sequence ID" value="NP_001001995.1"/>
</dbReference>
<dbReference type="UCSC" id="uc004cvw.4">
    <molecule id="Q13491-1"/>
    <property type="organism name" value="human"/>
</dbReference>
<dbReference type="AGR" id="HGNC:4461"/>
<dbReference type="CTD" id="2824"/>
<dbReference type="DisGeNET" id="2824"/>
<dbReference type="GeneCards" id="GPM6B"/>
<dbReference type="HGNC" id="HGNC:4461">
    <property type="gene designation" value="GPM6B"/>
</dbReference>
<dbReference type="HPA" id="ENSG00000046653">
    <property type="expression patterns" value="Group enriched (brain, retina)"/>
</dbReference>
<dbReference type="MIM" id="300051">
    <property type="type" value="gene"/>
</dbReference>
<dbReference type="neXtProt" id="NX_Q13491"/>
<dbReference type="OpenTargets" id="ENSG00000046653"/>
<dbReference type="PharmGKB" id="PA28844"/>
<dbReference type="VEuPathDB" id="HostDB:ENSG00000046653"/>
<dbReference type="GeneTree" id="ENSGT00390000006915"/>
<dbReference type="InParanoid" id="Q13491"/>
<dbReference type="OMA" id="NDCMARV"/>
<dbReference type="OrthoDB" id="9993736at2759"/>
<dbReference type="PAN-GO" id="Q13491">
    <property type="GO annotations" value="4 GO annotations based on evolutionary models"/>
</dbReference>
<dbReference type="PhylomeDB" id="Q13491"/>
<dbReference type="TreeFam" id="TF315162"/>
<dbReference type="PathwayCommons" id="Q13491"/>
<dbReference type="SignaLink" id="Q13491"/>
<dbReference type="BioGRID-ORCS" id="2824">
    <property type="hits" value="10 hits in 760 CRISPR screens"/>
</dbReference>
<dbReference type="ChiTaRS" id="GPM6B">
    <property type="organism name" value="human"/>
</dbReference>
<dbReference type="GeneWiki" id="GPM6B"/>
<dbReference type="GenomeRNAi" id="2824"/>
<dbReference type="Pharos" id="Q13491">
    <property type="development level" value="Tbio"/>
</dbReference>
<dbReference type="PRO" id="PR:Q13491"/>
<dbReference type="Proteomes" id="UP000005640">
    <property type="component" value="Chromosome X"/>
</dbReference>
<dbReference type="RNAct" id="Q13491">
    <property type="molecule type" value="protein"/>
</dbReference>
<dbReference type="Bgee" id="ENSG00000046653">
    <property type="expression patterns" value="Expressed in dorsal motor nucleus of vagus nerve and 202 other cell types or tissues"/>
</dbReference>
<dbReference type="ExpressionAtlas" id="Q13491">
    <property type="expression patterns" value="baseline and differential"/>
</dbReference>
<dbReference type="GO" id="GO:0045121">
    <property type="term" value="C:membrane raft"/>
    <property type="evidence" value="ECO:0000250"/>
    <property type="project" value="UniProtKB"/>
</dbReference>
<dbReference type="GO" id="GO:0043209">
    <property type="term" value="C:myelin sheath"/>
    <property type="evidence" value="ECO:0000318"/>
    <property type="project" value="GO_Central"/>
</dbReference>
<dbReference type="GO" id="GO:0005886">
    <property type="term" value="C:plasma membrane"/>
    <property type="evidence" value="ECO:0000250"/>
    <property type="project" value="UniProtKB"/>
</dbReference>
<dbReference type="GO" id="GO:0019911">
    <property type="term" value="F:structural constituent of myelin sheath"/>
    <property type="evidence" value="ECO:0000318"/>
    <property type="project" value="GO_Central"/>
</dbReference>
<dbReference type="GO" id="GO:0061564">
    <property type="term" value="P:axon development"/>
    <property type="evidence" value="ECO:0000318"/>
    <property type="project" value="GO_Central"/>
</dbReference>
<dbReference type="GO" id="GO:0022010">
    <property type="term" value="P:central nervous system myelination"/>
    <property type="evidence" value="ECO:0000318"/>
    <property type="project" value="GO_Central"/>
</dbReference>
<dbReference type="GO" id="GO:0085029">
    <property type="term" value="P:extracellular matrix assembly"/>
    <property type="evidence" value="ECO:0000315"/>
    <property type="project" value="UniProtKB"/>
</dbReference>
<dbReference type="GO" id="GO:2000009">
    <property type="term" value="P:negative regulation of protein localization to cell surface"/>
    <property type="evidence" value="ECO:0000250"/>
    <property type="project" value="UniProtKB"/>
</dbReference>
<dbReference type="GO" id="GO:0051612">
    <property type="term" value="P:negative regulation of serotonin uptake"/>
    <property type="evidence" value="ECO:0000250"/>
    <property type="project" value="UniProtKB"/>
</dbReference>
<dbReference type="GO" id="GO:0007399">
    <property type="term" value="P:nervous system development"/>
    <property type="evidence" value="ECO:0000303"/>
    <property type="project" value="UniProtKB"/>
</dbReference>
<dbReference type="GO" id="GO:0001503">
    <property type="term" value="P:ossification"/>
    <property type="evidence" value="ECO:0007669"/>
    <property type="project" value="UniProtKB-KW"/>
</dbReference>
<dbReference type="GO" id="GO:0030501">
    <property type="term" value="P:positive regulation of bone mineralization"/>
    <property type="evidence" value="ECO:0000315"/>
    <property type="project" value="UniProtKB"/>
</dbReference>
<dbReference type="GO" id="GO:0015031">
    <property type="term" value="P:protein transport"/>
    <property type="evidence" value="ECO:0007669"/>
    <property type="project" value="UniProtKB-KW"/>
</dbReference>
<dbReference type="GO" id="GO:0032956">
    <property type="term" value="P:regulation of actin cytoskeleton organization"/>
    <property type="evidence" value="ECO:0000315"/>
    <property type="project" value="UniProtKB"/>
</dbReference>
<dbReference type="GO" id="GO:0051893">
    <property type="term" value="P:regulation of focal adhesion assembly"/>
    <property type="evidence" value="ECO:0000315"/>
    <property type="project" value="UniProtKB"/>
</dbReference>
<dbReference type="InterPro" id="IPR001614">
    <property type="entry name" value="Myelin_PLP"/>
</dbReference>
<dbReference type="InterPro" id="IPR018237">
    <property type="entry name" value="Myelin_PLP_CS"/>
</dbReference>
<dbReference type="PANTHER" id="PTHR11683">
    <property type="entry name" value="MYELIN PROTEOLIPID"/>
    <property type="match status" value="1"/>
</dbReference>
<dbReference type="PANTHER" id="PTHR11683:SF10">
    <property type="entry name" value="NEURONAL MEMBRANE GLYCOPROTEIN M6-B"/>
    <property type="match status" value="1"/>
</dbReference>
<dbReference type="Pfam" id="PF01275">
    <property type="entry name" value="Myelin_PLP"/>
    <property type="match status" value="1"/>
</dbReference>
<dbReference type="PRINTS" id="PR00214">
    <property type="entry name" value="MYELINPLP"/>
</dbReference>
<dbReference type="SMART" id="SM00002">
    <property type="entry name" value="PLP"/>
    <property type="match status" value="1"/>
</dbReference>
<dbReference type="PROSITE" id="PS00575">
    <property type="entry name" value="MYELIN_PLP_1"/>
    <property type="match status" value="1"/>
</dbReference>
<dbReference type="PROSITE" id="PS01004">
    <property type="entry name" value="MYELIN_PLP_2"/>
    <property type="match status" value="1"/>
</dbReference>
<feature type="chain" id="PRO_0000159021" description="Neuronal membrane glycoprotein M6-b">
    <location>
        <begin position="1"/>
        <end position="265"/>
    </location>
</feature>
<feature type="transmembrane region" description="Helical" evidence="3">
    <location>
        <begin position="31"/>
        <end position="51"/>
    </location>
</feature>
<feature type="transmembrane region" description="Helical" evidence="3">
    <location>
        <begin position="90"/>
        <end position="110"/>
    </location>
</feature>
<feature type="transmembrane region" description="Helical" evidence="3">
    <location>
        <begin position="136"/>
        <end position="156"/>
    </location>
</feature>
<feature type="transmembrane region" description="Helical" evidence="3">
    <location>
        <begin position="224"/>
        <end position="244"/>
    </location>
</feature>
<feature type="modified residue" description="Phosphoserine" evidence="2">
    <location>
        <position position="257"/>
    </location>
</feature>
<feature type="glycosylation site" description="N-linked (GlcNAc...) asparagine" evidence="3">
    <location>
        <position position="73"/>
    </location>
</feature>
<feature type="glycosylation site" description="N-linked (GlcNAc...) asparagine" evidence="3">
    <location>
        <position position="177"/>
    </location>
</feature>
<feature type="splice variant" id="VSP_003326" description="In isoform 2." evidence="8">
    <original>MKPAMETAAEENTEQSQERK</original>
    <variation>M</variation>
    <location>
        <begin position="1"/>
        <end position="20"/>
    </location>
</feature>
<feature type="splice variant" id="VSP_041121" description="In isoform 3 and isoform 4." evidence="6 7">
    <original>K</original>
    <variation>KVNSRAEMEIGRYHWMYPGSKNHQYHPVPTLGDRASPLSSP</variation>
    <location>
        <position position="20"/>
    </location>
</feature>
<feature type="splice variant" id="VSP_043247" description="In isoform 4." evidence="6">
    <original>LIYMMATTYNYAVLKFKSREDCCTKF</original>
    <variation>IHFLMILSSNWAYLKDASKMQAYQDIKAKEEQELQDIQSRSKEQLNSYT</variation>
    <location>
        <begin position="240"/>
        <end position="265"/>
    </location>
</feature>
<feature type="modified residue" description="Phosphoserine" evidence="10">
    <location sequence="Q13491-4">
        <position position="318"/>
    </location>
</feature>
<organism>
    <name type="scientific">Homo sapiens</name>
    <name type="common">Human</name>
    <dbReference type="NCBI Taxonomy" id="9606"/>
    <lineage>
        <taxon>Eukaryota</taxon>
        <taxon>Metazoa</taxon>
        <taxon>Chordata</taxon>
        <taxon>Craniata</taxon>
        <taxon>Vertebrata</taxon>
        <taxon>Euteleostomi</taxon>
        <taxon>Mammalia</taxon>
        <taxon>Eutheria</taxon>
        <taxon>Euarchontoglires</taxon>
        <taxon>Primates</taxon>
        <taxon>Haplorrhini</taxon>
        <taxon>Catarrhini</taxon>
        <taxon>Hominidae</taxon>
        <taxon>Homo</taxon>
    </lineage>
</organism>
<keyword id="KW-0025">Alternative splicing</keyword>
<keyword id="KW-1003">Cell membrane</keyword>
<keyword id="KW-0217">Developmental protein</keyword>
<keyword id="KW-0221">Differentiation</keyword>
<keyword id="KW-0325">Glycoprotein</keyword>
<keyword id="KW-0472">Membrane</keyword>
<keyword id="KW-0524">Neurogenesis</keyword>
<keyword id="KW-0892">Osteogenesis</keyword>
<keyword id="KW-0597">Phosphoprotein</keyword>
<keyword id="KW-0653">Protein transport</keyword>
<keyword id="KW-1267">Proteomics identification</keyword>
<keyword id="KW-1185">Reference proteome</keyword>
<keyword id="KW-0812">Transmembrane</keyword>
<keyword id="KW-1133">Transmembrane helix</keyword>
<keyword id="KW-0813">Transport</keyword>